<protein>
    <recommendedName>
        <fullName>Respiratory growth induced protein 1</fullName>
    </recommendedName>
</protein>
<dbReference type="EMBL" id="FM992689">
    <property type="protein sequence ID" value="CAX44022.1"/>
    <property type="molecule type" value="Genomic_DNA"/>
</dbReference>
<dbReference type="RefSeq" id="XP_002418717.1">
    <property type="nucleotide sequence ID" value="XM_002418672.1"/>
</dbReference>
<dbReference type="SMR" id="B9WCA0"/>
<dbReference type="GeneID" id="8046259"/>
<dbReference type="KEGG" id="cdu:CD36_22420"/>
<dbReference type="CGD" id="CAL0000164252">
    <property type="gene designation" value="Cd36_22420"/>
</dbReference>
<dbReference type="VEuPathDB" id="FungiDB:CD36_22420"/>
<dbReference type="eggNOG" id="ENOG502S6JA">
    <property type="taxonomic scope" value="Eukaryota"/>
</dbReference>
<dbReference type="HOGENOM" id="CLU_118207_0_0_1"/>
<dbReference type="OrthoDB" id="4082176at2759"/>
<dbReference type="Proteomes" id="UP000002605">
    <property type="component" value="Chromosome 2"/>
</dbReference>
<dbReference type="GO" id="GO:0005886">
    <property type="term" value="C:plasma membrane"/>
    <property type="evidence" value="ECO:0007669"/>
    <property type="project" value="UniProtKB-SubCell"/>
</dbReference>
<dbReference type="GO" id="GO:0006112">
    <property type="term" value="P:energy reserve metabolic process"/>
    <property type="evidence" value="ECO:0007669"/>
    <property type="project" value="InterPro"/>
</dbReference>
<dbReference type="Gene3D" id="3.40.1000.40">
    <property type="entry name" value="Respiratory growth induced protein 1"/>
    <property type="match status" value="1"/>
</dbReference>
<dbReference type="InterPro" id="IPR022554">
    <property type="entry name" value="RGI1"/>
</dbReference>
<dbReference type="InterPro" id="IPR038235">
    <property type="entry name" value="RGI1_sf"/>
</dbReference>
<dbReference type="Pfam" id="PF10843">
    <property type="entry name" value="RGI1"/>
    <property type="match status" value="1"/>
</dbReference>
<proteinExistence type="inferred from homology"/>
<organism>
    <name type="scientific">Candida dubliniensis (strain CD36 / ATCC MYA-646 / CBS 7987 / NCPF 3949 / NRRL Y-17841)</name>
    <name type="common">Yeast</name>
    <dbReference type="NCBI Taxonomy" id="573826"/>
    <lineage>
        <taxon>Eukaryota</taxon>
        <taxon>Fungi</taxon>
        <taxon>Dikarya</taxon>
        <taxon>Ascomycota</taxon>
        <taxon>Saccharomycotina</taxon>
        <taxon>Pichiomycetes</taxon>
        <taxon>Debaryomycetaceae</taxon>
        <taxon>Candida/Lodderomyces clade</taxon>
        <taxon>Candida</taxon>
    </lineage>
</organism>
<feature type="chain" id="PRO_0000402281" description="Respiratory growth induced protein 1">
    <location>
        <begin position="1"/>
        <end position="201"/>
    </location>
</feature>
<feature type="region of interest" description="Disordered" evidence="2">
    <location>
        <begin position="1"/>
        <end position="38"/>
    </location>
</feature>
<accession>B9WCA0</accession>
<comment type="function">
    <text evidence="1">Involved in the control of energetic metabolism and significantly contribute to cell fitness, especially under respiratory growth conditions.</text>
</comment>
<comment type="subcellular location">
    <subcellularLocation>
        <location evidence="1">Cell membrane</location>
        <topology evidence="1">Peripheral membrane protein</topology>
    </subcellularLocation>
</comment>
<comment type="similarity">
    <text evidence="3">Belongs to the RGI1 family.</text>
</comment>
<gene>
    <name type="primary">RGI1</name>
    <name type="ORF">CD36_22420</name>
</gene>
<evidence type="ECO:0000250" key="1"/>
<evidence type="ECO:0000256" key="2">
    <source>
        <dbReference type="SAM" id="MobiDB-lite"/>
    </source>
</evidence>
<evidence type="ECO:0000305" key="3"/>
<name>RGI1_CANDC</name>
<sequence>MAGKKKSKSDSLPLDLDNIKPLDHLQPVPKTRSSSITSIESVDEPGTMKQVLLPPTIREFDELDQFESFVRDETWDNDFDYFHGKLHYYPPFVMKSCQNNLEKIKPTMNKNSKKFRRDLHHHIQKHLIKDLEKCCGYELNFGKGEIVETDNKVTWKFKDETDHGFSKEEEDLYDRHWRLELDVSCTNESAMVDVEYKSIPM</sequence>
<keyword id="KW-1003">Cell membrane</keyword>
<keyword id="KW-0472">Membrane</keyword>
<reference key="1">
    <citation type="journal article" date="2009" name="Genome Res.">
        <title>Comparative genomics of the fungal pathogens Candida dubliniensis and Candida albicans.</title>
        <authorList>
            <person name="Jackson A.P."/>
            <person name="Gamble J.A."/>
            <person name="Yeomans T."/>
            <person name="Moran G.P."/>
            <person name="Saunders D."/>
            <person name="Harris D."/>
            <person name="Aslett M."/>
            <person name="Barrell J.F."/>
            <person name="Butler G."/>
            <person name="Citiulo F."/>
            <person name="Coleman D.C."/>
            <person name="de Groot P.W.J."/>
            <person name="Goodwin T.J."/>
            <person name="Quail M.A."/>
            <person name="McQuillan J."/>
            <person name="Munro C.A."/>
            <person name="Pain A."/>
            <person name="Poulter R.T."/>
            <person name="Rajandream M.A."/>
            <person name="Renauld H."/>
            <person name="Spiering M.J."/>
            <person name="Tivey A."/>
            <person name="Gow N.A.R."/>
            <person name="Barrell B."/>
            <person name="Sullivan D.J."/>
            <person name="Berriman M."/>
        </authorList>
    </citation>
    <scope>NUCLEOTIDE SEQUENCE [LARGE SCALE GENOMIC DNA]</scope>
    <source>
        <strain>CD36 / ATCC MYA-646 / CBS 7987 / NCPF 3949 / NRRL Y-17841</strain>
    </source>
</reference>